<accession>Q110C1</accession>
<feature type="chain" id="PRO_0000260971" description="Large ribosomal subunit protein uL6">
    <location>
        <begin position="1"/>
        <end position="179"/>
    </location>
</feature>
<dbReference type="EMBL" id="CP000393">
    <property type="protein sequence ID" value="ABG52153.1"/>
    <property type="molecule type" value="Genomic_DNA"/>
</dbReference>
<dbReference type="RefSeq" id="WP_011612508.1">
    <property type="nucleotide sequence ID" value="NC_008312.1"/>
</dbReference>
<dbReference type="SMR" id="Q110C1"/>
<dbReference type="STRING" id="203124.Tery_2998"/>
<dbReference type="KEGG" id="ter:Tery_2998"/>
<dbReference type="eggNOG" id="COG0097">
    <property type="taxonomic scope" value="Bacteria"/>
</dbReference>
<dbReference type="HOGENOM" id="CLU_065464_1_2_3"/>
<dbReference type="OrthoDB" id="9805007at2"/>
<dbReference type="GO" id="GO:0022625">
    <property type="term" value="C:cytosolic large ribosomal subunit"/>
    <property type="evidence" value="ECO:0007669"/>
    <property type="project" value="TreeGrafter"/>
</dbReference>
<dbReference type="GO" id="GO:0019843">
    <property type="term" value="F:rRNA binding"/>
    <property type="evidence" value="ECO:0007669"/>
    <property type="project" value="UniProtKB-UniRule"/>
</dbReference>
<dbReference type="GO" id="GO:0003735">
    <property type="term" value="F:structural constituent of ribosome"/>
    <property type="evidence" value="ECO:0007669"/>
    <property type="project" value="InterPro"/>
</dbReference>
<dbReference type="GO" id="GO:0002181">
    <property type="term" value="P:cytoplasmic translation"/>
    <property type="evidence" value="ECO:0007669"/>
    <property type="project" value="TreeGrafter"/>
</dbReference>
<dbReference type="FunFam" id="3.90.930.12:FF:000001">
    <property type="entry name" value="50S ribosomal protein L6"/>
    <property type="match status" value="1"/>
</dbReference>
<dbReference type="FunFam" id="3.90.930.12:FF:000002">
    <property type="entry name" value="50S ribosomal protein L6"/>
    <property type="match status" value="1"/>
</dbReference>
<dbReference type="Gene3D" id="3.90.930.12">
    <property type="entry name" value="Ribosomal protein L6, alpha-beta domain"/>
    <property type="match status" value="2"/>
</dbReference>
<dbReference type="HAMAP" id="MF_01365_B">
    <property type="entry name" value="Ribosomal_uL6_B"/>
    <property type="match status" value="1"/>
</dbReference>
<dbReference type="InterPro" id="IPR000702">
    <property type="entry name" value="Ribosomal_uL6-like"/>
</dbReference>
<dbReference type="InterPro" id="IPR036789">
    <property type="entry name" value="Ribosomal_uL6-like_a/b-dom_sf"/>
</dbReference>
<dbReference type="InterPro" id="IPR020040">
    <property type="entry name" value="Ribosomal_uL6_a/b-dom"/>
</dbReference>
<dbReference type="InterPro" id="IPR019906">
    <property type="entry name" value="Ribosomal_uL6_bac-type"/>
</dbReference>
<dbReference type="InterPro" id="IPR002358">
    <property type="entry name" value="Ribosomal_uL6_CS"/>
</dbReference>
<dbReference type="NCBIfam" id="TIGR03654">
    <property type="entry name" value="L6_bact"/>
    <property type="match status" value="1"/>
</dbReference>
<dbReference type="PANTHER" id="PTHR11655">
    <property type="entry name" value="60S/50S RIBOSOMAL PROTEIN L6/L9"/>
    <property type="match status" value="1"/>
</dbReference>
<dbReference type="PANTHER" id="PTHR11655:SF14">
    <property type="entry name" value="LARGE RIBOSOMAL SUBUNIT PROTEIN UL6M"/>
    <property type="match status" value="1"/>
</dbReference>
<dbReference type="Pfam" id="PF00347">
    <property type="entry name" value="Ribosomal_L6"/>
    <property type="match status" value="2"/>
</dbReference>
<dbReference type="PIRSF" id="PIRSF002162">
    <property type="entry name" value="Ribosomal_L6"/>
    <property type="match status" value="1"/>
</dbReference>
<dbReference type="PRINTS" id="PR00059">
    <property type="entry name" value="RIBOSOMALL6"/>
</dbReference>
<dbReference type="SUPFAM" id="SSF56053">
    <property type="entry name" value="Ribosomal protein L6"/>
    <property type="match status" value="2"/>
</dbReference>
<dbReference type="PROSITE" id="PS00525">
    <property type="entry name" value="RIBOSOMAL_L6_1"/>
    <property type="match status" value="1"/>
</dbReference>
<sequence length="179" mass="19490">MSRIGKLPIPIPKKVTITIEGQKVTVKGPLGELSRVLPPEIAVKEQENTIIVKPQEQSRRARQRYGLCRTLVANMVEGVSKGYEKRLVIQGVGYRAQVQGKTLVLNVGYSKPVEMPAPEGINIAVENNTNVIVNGINKELVGNTAAKIRAVRPPEVYKGKGVRYAGEVIKLKAGKSGKK</sequence>
<organism>
    <name type="scientific">Trichodesmium erythraeum (strain IMS101)</name>
    <dbReference type="NCBI Taxonomy" id="203124"/>
    <lineage>
        <taxon>Bacteria</taxon>
        <taxon>Bacillati</taxon>
        <taxon>Cyanobacteriota</taxon>
        <taxon>Cyanophyceae</taxon>
        <taxon>Oscillatoriophycideae</taxon>
        <taxon>Oscillatoriales</taxon>
        <taxon>Microcoleaceae</taxon>
        <taxon>Trichodesmium</taxon>
    </lineage>
</organism>
<proteinExistence type="inferred from homology"/>
<gene>
    <name evidence="1" type="primary">rplF</name>
    <name evidence="1" type="synonym">rpl6</name>
    <name type="ordered locus">Tery_2998</name>
</gene>
<comment type="function">
    <text evidence="1">This protein binds to the 23S rRNA, and is important in its secondary structure. It is located near the subunit interface in the base of the L7/L12 stalk, and near the tRNA binding site of the peptidyltransferase center.</text>
</comment>
<comment type="subunit">
    <text evidence="1">Part of the 50S ribosomal subunit.</text>
</comment>
<comment type="similarity">
    <text evidence="1">Belongs to the universal ribosomal protein uL6 family.</text>
</comment>
<evidence type="ECO:0000255" key="1">
    <source>
        <dbReference type="HAMAP-Rule" id="MF_01365"/>
    </source>
</evidence>
<evidence type="ECO:0000305" key="2"/>
<name>RL6_TRIEI</name>
<protein>
    <recommendedName>
        <fullName evidence="1">Large ribosomal subunit protein uL6</fullName>
    </recommendedName>
    <alternativeName>
        <fullName evidence="2">50S ribosomal protein L6</fullName>
    </alternativeName>
</protein>
<keyword id="KW-0687">Ribonucleoprotein</keyword>
<keyword id="KW-0689">Ribosomal protein</keyword>
<keyword id="KW-0694">RNA-binding</keyword>
<keyword id="KW-0699">rRNA-binding</keyword>
<reference key="1">
    <citation type="journal article" date="2015" name="Proc. Natl. Acad. Sci. U.S.A.">
        <title>Trichodesmium genome maintains abundant, widespread noncoding DNA in situ, despite oligotrophic lifestyle.</title>
        <authorList>
            <person name="Walworth N."/>
            <person name="Pfreundt U."/>
            <person name="Nelson W.C."/>
            <person name="Mincer T."/>
            <person name="Heidelberg J.F."/>
            <person name="Fu F."/>
            <person name="Waterbury J.B."/>
            <person name="Glavina del Rio T."/>
            <person name="Goodwin L."/>
            <person name="Kyrpides N.C."/>
            <person name="Land M.L."/>
            <person name="Woyke T."/>
            <person name="Hutchins D.A."/>
            <person name="Hess W.R."/>
            <person name="Webb E.A."/>
        </authorList>
    </citation>
    <scope>NUCLEOTIDE SEQUENCE [LARGE SCALE GENOMIC DNA]</scope>
    <source>
        <strain>IMS101</strain>
    </source>
</reference>